<name>PPR42_MACFA</name>
<proteinExistence type="evidence at transcript level"/>
<organism>
    <name type="scientific">Macaca fascicularis</name>
    <name type="common">Crab-eating macaque</name>
    <name type="synonym">Cynomolgus monkey</name>
    <dbReference type="NCBI Taxonomy" id="9541"/>
    <lineage>
        <taxon>Eukaryota</taxon>
        <taxon>Metazoa</taxon>
        <taxon>Chordata</taxon>
        <taxon>Craniata</taxon>
        <taxon>Vertebrata</taxon>
        <taxon>Euteleostomi</taxon>
        <taxon>Mammalia</taxon>
        <taxon>Eutheria</taxon>
        <taxon>Euarchontoglires</taxon>
        <taxon>Primates</taxon>
        <taxon>Haplorrhini</taxon>
        <taxon>Catarrhini</taxon>
        <taxon>Cercopithecidae</taxon>
        <taxon>Cercopithecinae</taxon>
        <taxon>Macaca</taxon>
    </lineage>
</organism>
<comment type="function">
    <text evidence="1">Regulates phosphatase activity of protein phosphatase 1 (PP1) complexes in the testis.</text>
</comment>
<comment type="subunit">
    <text evidence="1">Interacts with PPP1CC isoform gamma-2; the interaction is direct. Interacts with actin, dynein, KIF5B, KIFC1 and tubulin. Associates with microtubules (By similarity).</text>
</comment>
<comment type="subcellular location">
    <subcellularLocation>
        <location evidence="1">Cytoplasm</location>
        <location evidence="1">Cytoskeleton</location>
    </subcellularLocation>
    <subcellularLocation>
        <location evidence="1">Cytoplasm</location>
        <location evidence="1">Cytoskeleton</location>
        <location evidence="1">Microtubule organizing center</location>
        <location evidence="1">Centrosome</location>
    </subcellularLocation>
    <text evidence="1">Colocalizes with alpha tubulin to the manchette of developing spermatids. Detected to nuclear rim in pachytene spermatocytes. Detected at nuclear surface, opposite the acrosome in elongating spermatids. Detected at the microtubule-organizing center (MTOC). Localized to the centrosomal region of late-stage spermatids (By similarity).</text>
</comment>
<comment type="PTM">
    <text evidence="1">Phosphorylated; in the testis.</text>
</comment>
<accession>Q4R803</accession>
<keyword id="KW-0963">Cytoplasm</keyword>
<keyword id="KW-0206">Cytoskeleton</keyword>
<keyword id="KW-0433">Leucine-rich repeat</keyword>
<keyword id="KW-1185">Reference proteome</keyword>
<keyword id="KW-0677">Repeat</keyword>
<dbReference type="EMBL" id="AB168658">
    <property type="protein sequence ID" value="BAE00769.1"/>
    <property type="molecule type" value="mRNA"/>
</dbReference>
<dbReference type="RefSeq" id="NP_001306489.1">
    <property type="nucleotide sequence ID" value="NM_001319560.1"/>
</dbReference>
<dbReference type="SMR" id="Q4R803"/>
<dbReference type="STRING" id="9541.ENSMFAP00000008289"/>
<dbReference type="eggNOG" id="KOG2769">
    <property type="taxonomic scope" value="Eukaryota"/>
</dbReference>
<dbReference type="Proteomes" id="UP000233100">
    <property type="component" value="Unplaced"/>
</dbReference>
<dbReference type="GO" id="GO:0005813">
    <property type="term" value="C:centrosome"/>
    <property type="evidence" value="ECO:0000250"/>
    <property type="project" value="UniProtKB"/>
</dbReference>
<dbReference type="GO" id="GO:0005737">
    <property type="term" value="C:cytoplasm"/>
    <property type="evidence" value="ECO:0007669"/>
    <property type="project" value="UniProtKB-KW"/>
</dbReference>
<dbReference type="GO" id="GO:0002177">
    <property type="term" value="C:manchette"/>
    <property type="evidence" value="ECO:0000250"/>
    <property type="project" value="UniProtKB"/>
</dbReference>
<dbReference type="GO" id="GO:0015630">
    <property type="term" value="C:microtubule cytoskeleton"/>
    <property type="evidence" value="ECO:0000250"/>
    <property type="project" value="UniProtKB"/>
</dbReference>
<dbReference type="GO" id="GO:0005815">
    <property type="term" value="C:microtubule organizing center"/>
    <property type="evidence" value="ECO:0000250"/>
    <property type="project" value="UniProtKB"/>
</dbReference>
<dbReference type="GO" id="GO:0003779">
    <property type="term" value="F:actin binding"/>
    <property type="evidence" value="ECO:0000250"/>
    <property type="project" value="UniProtKB"/>
</dbReference>
<dbReference type="GO" id="GO:0070840">
    <property type="term" value="F:dynein complex binding"/>
    <property type="evidence" value="ECO:0000250"/>
    <property type="project" value="UniProtKB"/>
</dbReference>
<dbReference type="GO" id="GO:0015631">
    <property type="term" value="F:tubulin binding"/>
    <property type="evidence" value="ECO:0000250"/>
    <property type="project" value="UniProtKB"/>
</dbReference>
<dbReference type="CDD" id="cd21340">
    <property type="entry name" value="PPP1R42"/>
    <property type="match status" value="1"/>
</dbReference>
<dbReference type="FunFam" id="3.80.10.10:FF:000293">
    <property type="entry name" value="Protein phosphatase 1 regulatory subunit 42"/>
    <property type="match status" value="1"/>
</dbReference>
<dbReference type="FunFam" id="3.80.10.10:FF:000201">
    <property type="entry name" value="protein phosphatase 1 regulatory subunit 42"/>
    <property type="match status" value="1"/>
</dbReference>
<dbReference type="Gene3D" id="3.80.10.10">
    <property type="entry name" value="Ribonuclease Inhibitor"/>
    <property type="match status" value="2"/>
</dbReference>
<dbReference type="InterPro" id="IPR001611">
    <property type="entry name" value="Leu-rich_rpt"/>
</dbReference>
<dbReference type="InterPro" id="IPR025875">
    <property type="entry name" value="Leu-rich_rpt_4"/>
</dbReference>
<dbReference type="InterPro" id="IPR032675">
    <property type="entry name" value="LRR_dom_sf"/>
</dbReference>
<dbReference type="InterPro" id="IPR050836">
    <property type="entry name" value="SDS22/Internalin_LRR"/>
</dbReference>
<dbReference type="PANTHER" id="PTHR46652">
    <property type="entry name" value="LEUCINE-RICH REPEAT AND IQ DOMAIN-CONTAINING PROTEIN 1-RELATED"/>
    <property type="match status" value="1"/>
</dbReference>
<dbReference type="PANTHER" id="PTHR46652:SF3">
    <property type="entry name" value="LEUCINE-RICH REPEAT-CONTAINING PROTEIN 9"/>
    <property type="match status" value="1"/>
</dbReference>
<dbReference type="Pfam" id="PF12799">
    <property type="entry name" value="LRR_4"/>
    <property type="match status" value="1"/>
</dbReference>
<dbReference type="Pfam" id="PF14580">
    <property type="entry name" value="LRR_9"/>
    <property type="match status" value="1"/>
</dbReference>
<dbReference type="SMART" id="SM00365">
    <property type="entry name" value="LRR_SD22"/>
    <property type="match status" value="4"/>
</dbReference>
<dbReference type="SUPFAM" id="SSF52058">
    <property type="entry name" value="L domain-like"/>
    <property type="match status" value="1"/>
</dbReference>
<dbReference type="PROSITE" id="PS51450">
    <property type="entry name" value="LRR"/>
    <property type="match status" value="6"/>
</dbReference>
<protein>
    <recommendedName>
        <fullName>Protein phosphatase 1 regulatory subunit 42</fullName>
    </recommendedName>
    <alternativeName>
        <fullName>Leucine-rich repeat-containing protein 67</fullName>
    </alternativeName>
</protein>
<sequence>MVRLTLDLIARNSNLKPRKEETISQCLKKITHINFSDKNIDAIEDLSLCKNLSVLYLYDNCISQITNLNYATNLTHLYLQNNCIPCIENLRSLKKLEKLYLGGNYIAVIEGLEGLGELRELHVENQRLPLGEKLLFDPRTLHSLAKSLSILNISNNNIDDIRDLEILENLNQLIAVDNQLLHVKDLEFLLNKLMKLWKIDLNGNPVCLKPKYRDRLILVSKSLEFLDGKEIKNIERQFLMNWKASKDAKKISKKRSSKNEDASNSLISNFETMHHIVPVYYPQVGKPKLVFFSEIQRYPVNGNASPESSREDYTKIIEEMGNLSLKQSESLLTKNDVHEPHLFHNPKEKENLFAENE</sequence>
<feature type="chain" id="PRO_0000326176" description="Protein phosphatase 1 regulatory subunit 42">
    <location>
        <begin position="1"/>
        <end position="357"/>
    </location>
</feature>
<feature type="repeat" description="LRR 1">
    <location>
        <begin position="29"/>
        <end position="50"/>
    </location>
</feature>
<feature type="repeat" description="LRR 2">
    <location>
        <begin position="51"/>
        <end position="72"/>
    </location>
</feature>
<feature type="repeat" description="LRR 3">
    <location>
        <begin position="73"/>
        <end position="94"/>
    </location>
</feature>
<feature type="repeat" description="LRR 4">
    <location>
        <begin position="95"/>
        <end position="116"/>
    </location>
</feature>
<feature type="repeat" description="LRR 5">
    <location>
        <begin position="117"/>
        <end position="138"/>
    </location>
</feature>
<feature type="repeat" description="LRR 6">
    <location>
        <begin position="147"/>
        <end position="168"/>
    </location>
</feature>
<feature type="repeat" description="LRR 7">
    <location>
        <begin position="169"/>
        <end position="190"/>
    </location>
</feature>
<feature type="domain" description="LRRCT">
    <location>
        <begin position="204"/>
        <end position="242"/>
    </location>
</feature>
<evidence type="ECO:0000250" key="1"/>
<reference key="1">
    <citation type="submission" date="2005-06" db="EMBL/GenBank/DDBJ databases">
        <title>DNA sequences of macaque genes expressed in brain or testis and its evolutionary implications.</title>
        <authorList>
            <consortium name="International consortium for macaque cDNA sequencing and analysis"/>
        </authorList>
    </citation>
    <scope>NUCLEOTIDE SEQUENCE [LARGE SCALE MRNA]</scope>
    <source>
        <tissue>Testis</tissue>
    </source>
</reference>
<gene>
    <name type="primary">PPP1R42</name>
    <name type="synonym">LRRC67</name>
    <name type="ORF">QtsA-13888</name>
</gene>